<comment type="subunit">
    <text evidence="1">Part of a tripartite efflux system composed of MdtA, MdtB and MdtC. MdtC forms a heteromultimer with MdtB.</text>
</comment>
<comment type="subcellular location">
    <subcellularLocation>
        <location evidence="1">Cell inner membrane</location>
        <topology evidence="1">Multi-pass membrane protein</topology>
    </subcellularLocation>
</comment>
<comment type="similarity">
    <text evidence="1">Belongs to the resistance-nodulation-cell division (RND) (TC 2.A.6) family. MdtC subfamily.</text>
</comment>
<gene>
    <name evidence="1" type="primary">mdtC</name>
    <name type="ordered locus">EAM_2185</name>
</gene>
<dbReference type="EMBL" id="FN666575">
    <property type="protein sequence ID" value="CBJ46859.1"/>
    <property type="molecule type" value="Genomic_DNA"/>
</dbReference>
<dbReference type="RefSeq" id="WP_004158348.1">
    <property type="nucleotide sequence ID" value="NC_013971.1"/>
</dbReference>
<dbReference type="SMR" id="D4I6V4"/>
<dbReference type="GeneID" id="97606467"/>
<dbReference type="KEGG" id="eay:EAM_2185"/>
<dbReference type="HOGENOM" id="CLU_002755_1_2_6"/>
<dbReference type="GO" id="GO:0005886">
    <property type="term" value="C:plasma membrane"/>
    <property type="evidence" value="ECO:0007669"/>
    <property type="project" value="UniProtKB-SubCell"/>
</dbReference>
<dbReference type="GO" id="GO:0042910">
    <property type="term" value="F:xenobiotic transmembrane transporter activity"/>
    <property type="evidence" value="ECO:0007669"/>
    <property type="project" value="TreeGrafter"/>
</dbReference>
<dbReference type="FunFam" id="1.20.1640.10:FF:000001">
    <property type="entry name" value="Efflux pump membrane transporter"/>
    <property type="match status" value="1"/>
</dbReference>
<dbReference type="FunFam" id="3.30.70.1430:FF:000001">
    <property type="entry name" value="Efflux pump membrane transporter"/>
    <property type="match status" value="1"/>
</dbReference>
<dbReference type="Gene3D" id="3.30.70.1430">
    <property type="entry name" value="Multidrug efflux transporter AcrB pore domain"/>
    <property type="match status" value="2"/>
</dbReference>
<dbReference type="Gene3D" id="3.30.70.1440">
    <property type="entry name" value="Multidrug efflux transporter AcrB pore domain"/>
    <property type="match status" value="1"/>
</dbReference>
<dbReference type="Gene3D" id="3.30.70.1320">
    <property type="entry name" value="Multidrug efflux transporter AcrB pore domain like"/>
    <property type="match status" value="1"/>
</dbReference>
<dbReference type="Gene3D" id="3.30.2090.10">
    <property type="entry name" value="Multidrug efflux transporter AcrB TolC docking domain, DN and DC subdomains"/>
    <property type="match status" value="2"/>
</dbReference>
<dbReference type="Gene3D" id="1.20.1640.10">
    <property type="entry name" value="Multidrug efflux transporter AcrB transmembrane domain"/>
    <property type="match status" value="2"/>
</dbReference>
<dbReference type="HAMAP" id="MF_01424">
    <property type="entry name" value="MdtC"/>
    <property type="match status" value="1"/>
</dbReference>
<dbReference type="InterPro" id="IPR027463">
    <property type="entry name" value="AcrB_DN_DC_subdom"/>
</dbReference>
<dbReference type="InterPro" id="IPR001036">
    <property type="entry name" value="Acrflvin-R"/>
</dbReference>
<dbReference type="InterPro" id="IPR023931">
    <property type="entry name" value="Multidrug-R_MdtC"/>
</dbReference>
<dbReference type="NCBIfam" id="NF007905">
    <property type="entry name" value="PRK10614.1"/>
    <property type="match status" value="1"/>
</dbReference>
<dbReference type="NCBIfam" id="NF033617">
    <property type="entry name" value="RND_permease_2"/>
    <property type="match status" value="1"/>
</dbReference>
<dbReference type="PANTHER" id="PTHR32063">
    <property type="match status" value="1"/>
</dbReference>
<dbReference type="PANTHER" id="PTHR32063:SF34">
    <property type="entry name" value="MULTIDRUG RESISTANCE PROTEIN MDTC"/>
    <property type="match status" value="1"/>
</dbReference>
<dbReference type="Pfam" id="PF00873">
    <property type="entry name" value="ACR_tran"/>
    <property type="match status" value="1"/>
</dbReference>
<dbReference type="PRINTS" id="PR00702">
    <property type="entry name" value="ACRIFLAVINRP"/>
</dbReference>
<dbReference type="SUPFAM" id="SSF82693">
    <property type="entry name" value="Multidrug efflux transporter AcrB pore domain, PN1, PN2, PC1 and PC2 subdomains"/>
    <property type="match status" value="3"/>
</dbReference>
<dbReference type="SUPFAM" id="SSF82714">
    <property type="entry name" value="Multidrug efflux transporter AcrB TolC docking domain, DN and DC subdomains"/>
    <property type="match status" value="2"/>
</dbReference>
<dbReference type="SUPFAM" id="SSF82866">
    <property type="entry name" value="Multidrug efflux transporter AcrB transmembrane domain"/>
    <property type="match status" value="2"/>
</dbReference>
<protein>
    <recommendedName>
        <fullName evidence="1">Multidrug resistance protein MdtC</fullName>
    </recommendedName>
    <alternativeName>
        <fullName evidence="1">Multidrug transporter MdtC</fullName>
    </alternativeName>
</protein>
<keyword id="KW-0997">Cell inner membrane</keyword>
<keyword id="KW-1003">Cell membrane</keyword>
<keyword id="KW-0472">Membrane</keyword>
<keyword id="KW-0812">Transmembrane</keyword>
<keyword id="KW-1133">Transmembrane helix</keyword>
<keyword id="KW-0813">Transport</keyword>
<evidence type="ECO:0000255" key="1">
    <source>
        <dbReference type="HAMAP-Rule" id="MF_01424"/>
    </source>
</evidence>
<organism>
    <name type="scientific">Erwinia amylovora (strain ATCC 49946 / CCPPB 0273 / Ea273 / 27-3)</name>
    <dbReference type="NCBI Taxonomy" id="716540"/>
    <lineage>
        <taxon>Bacteria</taxon>
        <taxon>Pseudomonadati</taxon>
        <taxon>Pseudomonadota</taxon>
        <taxon>Gammaproteobacteria</taxon>
        <taxon>Enterobacterales</taxon>
        <taxon>Erwiniaceae</taxon>
        <taxon>Erwinia</taxon>
    </lineage>
</organism>
<accession>D4I6V4</accession>
<feature type="chain" id="PRO_0000414034" description="Multidrug resistance protein MdtC">
    <location>
        <begin position="1"/>
        <end position="1024"/>
    </location>
</feature>
<feature type="transmembrane region" description="Helical" evidence="1">
    <location>
        <begin position="3"/>
        <end position="23"/>
    </location>
</feature>
<feature type="transmembrane region" description="Helical" evidence="1">
    <location>
        <begin position="333"/>
        <end position="353"/>
    </location>
</feature>
<feature type="transmembrane region" description="Helical" evidence="1">
    <location>
        <begin position="360"/>
        <end position="380"/>
    </location>
</feature>
<feature type="transmembrane region" description="Helical" evidence="1">
    <location>
        <begin position="387"/>
        <end position="407"/>
    </location>
</feature>
<feature type="transmembrane region" description="Helical" evidence="1">
    <location>
        <begin position="431"/>
        <end position="451"/>
    </location>
</feature>
<feature type="transmembrane region" description="Helical" evidence="1">
    <location>
        <begin position="463"/>
        <end position="483"/>
    </location>
</feature>
<feature type="transmembrane region" description="Helical" evidence="1">
    <location>
        <begin position="528"/>
        <end position="548"/>
    </location>
</feature>
<feature type="transmembrane region" description="Helical" evidence="1">
    <location>
        <begin position="853"/>
        <end position="873"/>
    </location>
</feature>
<feature type="transmembrane region" description="Helical" evidence="1">
    <location>
        <begin position="875"/>
        <end position="895"/>
    </location>
</feature>
<feature type="transmembrane region" description="Helical" evidence="1">
    <location>
        <begin position="897"/>
        <end position="917"/>
    </location>
</feature>
<feature type="transmembrane region" description="Helical" evidence="1">
    <location>
        <begin position="953"/>
        <end position="973"/>
    </location>
</feature>
<feature type="transmembrane region" description="Helical" evidence="1">
    <location>
        <begin position="984"/>
        <end position="1004"/>
    </location>
</feature>
<name>MDTC_ERWAE</name>
<sequence>MKFLSLFIYRPVATSLLTLALVLSGLLGFRMLPVASLPQMDFPVIVVSASLPGASPETMASSVATPLERALGRIAGVSEMTSSSSLGSTEVVLMFDFDRDINGAARDVQGAINAAQSLLPSGMPRRPSYRKVNPSDAPIMIMTLSSDTFSPGQLYDYASTQLAQRLSQIDGVGDVTIGGSSLPAVRVDLNPQALFNQGVSLDAVRTTIANANVRRPQGAIDDRQQRWWLKTNDELHTAAEYRPLVIRYHQGAAVRLQDVATVTDSVENVRNAGMSNARPAVLVVIRKSPQANVIDTIDRIRDEVPQLRKTIPAAIQLEIAQDSSATIRASLHEVEQSLAVSVGLVVLVVFAFLRSGRATLIPAVAVPVSLIGTFAAMYLCGFSLNNLSLMALTVASGFVVDDAIVVLENISRHVEAGLKPLQAALLGGREVGFTVVSMSVSLIAVFIPLLMQGGIIGRFFREFAITLSVSIAISLVISLTLTPVMCARLLRSSAPRQQPRRRGFGRMLLVVQQGYGRALHRVLDHARWALLVFVASLGLTVYLFISMPKTFMPEQDTGRLMGFIQADQSTSFQAMRSKVEHFMRVVHADPAVESVVGFTGGWETNSGAMFIALKPLSTRGDNAQQVIARLRSKLAKEAGATLWLRAVQDIRIGARQSDGGYQYSLLSDSLDDLRQWQPKIRRAFASLPELVDVNSDQQDKGAEMALTYDRTRMARLGIDVADVNGLLNNAFGQRQISTIYQPLNQYQVVMGVDARYAQDINALNQMYVTNHQGQPIPLSSFASWQPANAPLSVEHEGLSAVSTLSFNLPEGVSLSQAAAAIDRSVIALGMPSSVRGSFSGTAAVFEQTQSSQLWLILAAIATVYIVLGMLYESYVHPLTILSTLPSAGMGALLALKLFNTPFSLIALIGILLLIGIVKKNAIMMVDFALQAQRQDGMPVREAIFQASLLRFRPIIMTTLAAMLGALPLVLSSGDGAELRQPLGITIVGGLVVSQLLTLFTTPVVYLYMDKLRRKPRWRPVPAQS</sequence>
<reference key="1">
    <citation type="journal article" date="2010" name="J. Bacteriol.">
        <title>Complete genome sequence of the plant pathogen Erwinia amylovora strain ATCC 49946.</title>
        <authorList>
            <person name="Sebaihia M."/>
            <person name="Bocsanczy A.M."/>
            <person name="Biehl B.S."/>
            <person name="Quail M.A."/>
            <person name="Perna N.T."/>
            <person name="Glasner J.D."/>
            <person name="DeClerck G.A."/>
            <person name="Cartinhour S."/>
            <person name="Schneider D.J."/>
            <person name="Bentley S.D."/>
            <person name="Parkhill J."/>
            <person name="Beer S.V."/>
        </authorList>
    </citation>
    <scope>NUCLEOTIDE SEQUENCE [LARGE SCALE GENOMIC DNA]</scope>
    <source>
        <strain>ATCC 49946 / CCPPB 0273 / Ea273 / 27-3</strain>
    </source>
</reference>
<proteinExistence type="inferred from homology"/>